<accession>Q37704</accession>
<geneLocation type="mitochondrion"/>
<proteinExistence type="inferred from homology"/>
<comment type="function">
    <text evidence="1">Core subunit of the mitochondrial membrane respiratory chain NADH dehydrogenase (Complex I) that is believed to belong to the minimal assembly required for catalysis. Complex I functions in the transfer of electrons from NADH to the respiratory chain. The immediate electron acceptor for the enzyme is believed to be ubiquinone (By similarity).</text>
</comment>
<comment type="catalytic activity">
    <reaction>
        <text>a ubiquinone + NADH + 5 H(+)(in) = a ubiquinol + NAD(+) + 4 H(+)(out)</text>
        <dbReference type="Rhea" id="RHEA:29091"/>
        <dbReference type="Rhea" id="RHEA-COMP:9565"/>
        <dbReference type="Rhea" id="RHEA-COMP:9566"/>
        <dbReference type="ChEBI" id="CHEBI:15378"/>
        <dbReference type="ChEBI" id="CHEBI:16389"/>
        <dbReference type="ChEBI" id="CHEBI:17976"/>
        <dbReference type="ChEBI" id="CHEBI:57540"/>
        <dbReference type="ChEBI" id="CHEBI:57945"/>
        <dbReference type="EC" id="7.1.1.2"/>
    </reaction>
</comment>
<comment type="subcellular location">
    <subcellularLocation>
        <location>Mitochondrion inner membrane</location>
        <topology>Multi-pass membrane protein</topology>
    </subcellularLocation>
</comment>
<comment type="similarity">
    <text evidence="3">Belongs to the complex I subunit 2 family.</text>
</comment>
<reference key="1">
    <citation type="journal article" date="1994" name="J. Mol. Evol.">
        <title>Speciation in the Artemia genus: mitochondrial DNA analysis of bisexual and parthenogenetic brine shrimps.</title>
        <authorList>
            <person name="Perez M.L."/>
            <person name="Valverde J.R."/>
            <person name="Batuecas B."/>
            <person name="Amat F."/>
            <person name="Marco R."/>
            <person name="Garesse R."/>
        </authorList>
    </citation>
    <scope>NUCLEOTIDE SEQUENCE [GENOMIC DNA]</scope>
</reference>
<protein>
    <recommendedName>
        <fullName>NADH-ubiquinone oxidoreductase chain 2</fullName>
        <ecNumber>7.1.1.2</ecNumber>
    </recommendedName>
    <alternativeName>
        <fullName>NADH dehydrogenase subunit 2</fullName>
    </alternativeName>
</protein>
<gene>
    <name type="primary">ND2</name>
    <name type="synonym">ND-2</name>
</gene>
<feature type="chain" id="PRO_0000117553" description="NADH-ubiquinone oxidoreductase chain 2">
    <location>
        <begin position="1"/>
        <end position="296"/>
    </location>
</feature>
<feature type="transmembrane region" description="Helical" evidence="2">
    <location>
        <begin position="5"/>
        <end position="25"/>
    </location>
</feature>
<feature type="transmembrane region" description="Helical" evidence="2">
    <location>
        <begin position="49"/>
        <end position="69"/>
    </location>
</feature>
<feature type="transmembrane region" description="Helical" evidence="2">
    <location>
        <begin position="71"/>
        <end position="91"/>
    </location>
</feature>
<feature type="transmembrane region" description="Helical" evidence="2">
    <location>
        <begin position="114"/>
        <end position="134"/>
    </location>
</feature>
<feature type="transmembrane region" description="Helical" evidence="2">
    <location>
        <begin position="167"/>
        <end position="187"/>
    </location>
</feature>
<feature type="transmembrane region" description="Helical" evidence="2">
    <location>
        <begin position="209"/>
        <end position="229"/>
    </location>
</feature>
<feature type="transmembrane region" description="Helical" evidence="2">
    <location>
        <begin position="242"/>
        <end position="262"/>
    </location>
</feature>
<feature type="transmembrane region" description="Helical" evidence="2">
    <location>
        <begin position="276"/>
        <end position="296"/>
    </location>
</feature>
<organism>
    <name type="scientific">Artemia franciscana</name>
    <name type="common">Brine shrimp</name>
    <name type="synonym">Artemia sanfranciscana</name>
    <dbReference type="NCBI Taxonomy" id="6661"/>
    <lineage>
        <taxon>Eukaryota</taxon>
        <taxon>Metazoa</taxon>
        <taxon>Ecdysozoa</taxon>
        <taxon>Arthropoda</taxon>
        <taxon>Crustacea</taxon>
        <taxon>Branchiopoda</taxon>
        <taxon>Anostraca</taxon>
        <taxon>Artemiidae</taxon>
        <taxon>Artemia</taxon>
    </lineage>
</organism>
<keyword id="KW-0249">Electron transport</keyword>
<keyword id="KW-0472">Membrane</keyword>
<keyword id="KW-0496">Mitochondrion</keyword>
<keyword id="KW-0999">Mitochondrion inner membrane</keyword>
<keyword id="KW-0520">NAD</keyword>
<keyword id="KW-0679">Respiratory chain</keyword>
<keyword id="KW-1278">Translocase</keyword>
<keyword id="KW-0812">Transmembrane</keyword>
<keyword id="KW-1133">Transmembrane helix</keyword>
<keyword id="KW-0813">Transport</keyword>
<keyword id="KW-0830">Ubiquinone</keyword>
<sequence>MIKWLCLFFSYILMVSSHSWLGLWLSMEMNSLSFIPIMIEESKENSLKYFLIQSVASVIFLASILNQSFSFLIPFALLIKIGAAPFHMWLVSISKSMSWKVLSLLMTFQKIGPLLGLAMLQFTNSFFIFISAFIGGLGGINQSNLRLIMAFSSVSHLSWLMVNMSSFFLMLVYYVTYLAILYFAVILLQQSGMYSLAQMNSNASLIYKASISFNLLSLAGLPPFLGFFIKWMSLEMNILSPLLVLALVVSSCFSVYFYFSIAMSSLLFPSEVKSKKMEIPGILSMGFNIFLPLFFL</sequence>
<evidence type="ECO:0000250" key="1"/>
<evidence type="ECO:0000255" key="2"/>
<evidence type="ECO:0000305" key="3"/>
<name>NU2M_ARTSF</name>
<dbReference type="EC" id="7.1.1.2"/>
<dbReference type="EMBL" id="X69067">
    <property type="protein sequence ID" value="CAA48805.1"/>
    <property type="molecule type" value="Genomic_DNA"/>
</dbReference>
<dbReference type="PIR" id="S60637">
    <property type="entry name" value="S60637"/>
</dbReference>
<dbReference type="RefSeq" id="NP_007108.1">
    <property type="nucleotide sequence ID" value="NC_001620.1"/>
</dbReference>
<dbReference type="SMR" id="Q37704"/>
<dbReference type="GeneID" id="807795"/>
<dbReference type="KEGG" id="afra:807795"/>
<dbReference type="CTD" id="4536"/>
<dbReference type="GO" id="GO:0005743">
    <property type="term" value="C:mitochondrial inner membrane"/>
    <property type="evidence" value="ECO:0007669"/>
    <property type="project" value="UniProtKB-SubCell"/>
</dbReference>
<dbReference type="GO" id="GO:0008137">
    <property type="term" value="F:NADH dehydrogenase (ubiquinone) activity"/>
    <property type="evidence" value="ECO:0007669"/>
    <property type="project" value="UniProtKB-EC"/>
</dbReference>
<dbReference type="GO" id="GO:0006120">
    <property type="term" value="P:mitochondrial electron transport, NADH to ubiquinone"/>
    <property type="evidence" value="ECO:0007669"/>
    <property type="project" value="InterPro"/>
</dbReference>
<dbReference type="InterPro" id="IPR050175">
    <property type="entry name" value="Complex_I_Subunit_2"/>
</dbReference>
<dbReference type="InterPro" id="IPR003917">
    <property type="entry name" value="NADH_UbQ_OxRdtase_chain2"/>
</dbReference>
<dbReference type="InterPro" id="IPR001750">
    <property type="entry name" value="ND/Mrp_TM"/>
</dbReference>
<dbReference type="PANTHER" id="PTHR46552">
    <property type="entry name" value="NADH-UBIQUINONE OXIDOREDUCTASE CHAIN 2"/>
    <property type="match status" value="1"/>
</dbReference>
<dbReference type="PANTHER" id="PTHR46552:SF1">
    <property type="entry name" value="NADH-UBIQUINONE OXIDOREDUCTASE CHAIN 2"/>
    <property type="match status" value="1"/>
</dbReference>
<dbReference type="Pfam" id="PF00361">
    <property type="entry name" value="Proton_antipo_M"/>
    <property type="match status" value="1"/>
</dbReference>
<dbReference type="PRINTS" id="PR01436">
    <property type="entry name" value="NADHDHGNASE2"/>
</dbReference>